<feature type="initiator methionine" description="Removed" evidence="2">
    <location>
        <position position="1"/>
    </location>
</feature>
<feature type="chain" id="PRO_0000183909" description="Cytochrome c oxidase subunit 7s">
    <location>
        <begin position="2"/>
        <end position="55"/>
    </location>
</feature>
<feature type="transmembrane region" description="Helical" evidence="1">
    <location>
        <begin position="13"/>
        <end position="35"/>
    </location>
</feature>
<accession>P20610</accession>
<accession>Q27561</accession>
<accession>Q54Z11</accession>
<gene>
    <name type="primary">cxgS</name>
    <name type="synonym">cox7s</name>
    <name type="ORF">DDB_G0277839</name>
</gene>
<proteinExistence type="evidence at protein level"/>
<comment type="function">
    <text>This protein is one of the nuclear-coded polypeptide chains of cytochrome c oxidase, the terminal oxidase in mitochondrial electron transport.</text>
</comment>
<comment type="catalytic activity">
    <reaction>
        <text>4 Fe(II)-[cytochrome c] + O2 + 8 H(+)(in) = 4 Fe(III)-[cytochrome c] + 2 H2O + 4 H(+)(out)</text>
        <dbReference type="Rhea" id="RHEA:11436"/>
        <dbReference type="Rhea" id="RHEA-COMP:10350"/>
        <dbReference type="Rhea" id="RHEA-COMP:14399"/>
        <dbReference type="ChEBI" id="CHEBI:15377"/>
        <dbReference type="ChEBI" id="CHEBI:15378"/>
        <dbReference type="ChEBI" id="CHEBI:15379"/>
        <dbReference type="ChEBI" id="CHEBI:29033"/>
        <dbReference type="ChEBI" id="CHEBI:29034"/>
        <dbReference type="EC" id="7.1.1.9"/>
    </reaction>
</comment>
<comment type="subunit">
    <text>Slime mold cytochrome c oxidase consists of at least seven different polypeptides species, subunits I, II, III, IV, V, VI, and VIIe/s in order of MW.</text>
</comment>
<comment type="subcellular location">
    <subcellularLocation>
        <location>Mitochondrion inner membrane</location>
    </subcellularLocation>
</comment>
<comment type="developmental stage">
    <text>When cells enter the stationary phase of growth, during the vegetative state, subunit VIIe is replaced by VIIs. The switching depends on the oxygen tension.</text>
</comment>
<organism>
    <name type="scientific">Dictyostelium discoideum</name>
    <name type="common">Social amoeba</name>
    <dbReference type="NCBI Taxonomy" id="44689"/>
    <lineage>
        <taxon>Eukaryota</taxon>
        <taxon>Amoebozoa</taxon>
        <taxon>Evosea</taxon>
        <taxon>Eumycetozoa</taxon>
        <taxon>Dictyostelia</taxon>
        <taxon>Dictyosteliales</taxon>
        <taxon>Dictyosteliaceae</taxon>
        <taxon>Dictyostelium</taxon>
    </lineage>
</organism>
<name>COXS_DICDI</name>
<keyword id="KW-0903">Direct protein sequencing</keyword>
<keyword id="KW-0472">Membrane</keyword>
<keyword id="KW-0496">Mitochondrion</keyword>
<keyword id="KW-0999">Mitochondrion inner membrane</keyword>
<keyword id="KW-1185">Reference proteome</keyword>
<keyword id="KW-1278">Translocase</keyword>
<keyword id="KW-0812">Transmembrane</keyword>
<keyword id="KW-1133">Transmembrane helix</keyword>
<sequence length="55" mass="6275">MTHALPKVVKSQLVQDIGVALILGSIAGCFFKYGVDKKKQRERVAFYEKYDKEDL</sequence>
<dbReference type="EC" id="7.1.1.9"/>
<dbReference type="EMBL" id="X99344">
    <property type="protein sequence ID" value="CAA67725.1"/>
    <property type="molecule type" value="Genomic_DNA"/>
</dbReference>
<dbReference type="EMBL" id="AAFI02000023">
    <property type="protein sequence ID" value="EAL68092.1"/>
    <property type="molecule type" value="Genomic_DNA"/>
</dbReference>
<dbReference type="EMBL" id="Z30963">
    <property type="protein sequence ID" value="CAA83217.1"/>
    <property type="molecule type" value="Genomic_DNA"/>
</dbReference>
<dbReference type="PIR" id="B34254">
    <property type="entry name" value="B34254"/>
</dbReference>
<dbReference type="RefSeq" id="XP_642041.1">
    <property type="nucleotide sequence ID" value="XM_636949.1"/>
</dbReference>
<dbReference type="SMR" id="P20610"/>
<dbReference type="FunCoup" id="P20610">
    <property type="interactions" value="877"/>
</dbReference>
<dbReference type="STRING" id="44689.P20610"/>
<dbReference type="PaxDb" id="44689-DDB0216180"/>
<dbReference type="EnsemblProtists" id="EAL68092">
    <property type="protein sequence ID" value="EAL68092"/>
    <property type="gene ID" value="DDB_G0277839"/>
</dbReference>
<dbReference type="GeneID" id="8621253"/>
<dbReference type="KEGG" id="ddi:DDB_G0277839"/>
<dbReference type="dictyBase" id="DDB_G0277839">
    <property type="gene designation" value="cxgS"/>
</dbReference>
<dbReference type="VEuPathDB" id="AmoebaDB:DDB_G0277839"/>
<dbReference type="HOGENOM" id="CLU_3072688_0_0_1"/>
<dbReference type="InParanoid" id="P20610"/>
<dbReference type="OMA" id="MTHALPK"/>
<dbReference type="PRO" id="PR:P20610"/>
<dbReference type="Proteomes" id="UP000002195">
    <property type="component" value="Chromosome 3"/>
</dbReference>
<dbReference type="GO" id="GO:0005743">
    <property type="term" value="C:mitochondrial inner membrane"/>
    <property type="evidence" value="ECO:0007669"/>
    <property type="project" value="UniProtKB-SubCell"/>
</dbReference>
<dbReference type="GO" id="GO:0004129">
    <property type="term" value="F:cytochrome-c oxidase activity"/>
    <property type="evidence" value="ECO:0007669"/>
    <property type="project" value="UniProtKB-EC"/>
</dbReference>
<dbReference type="GO" id="GO:0006123">
    <property type="term" value="P:mitochondrial electron transport, cytochrome c to oxygen"/>
    <property type="evidence" value="ECO:0000318"/>
    <property type="project" value="GO_Central"/>
</dbReference>
<dbReference type="GO" id="GO:0001666">
    <property type="term" value="P:response to hypoxia"/>
    <property type="evidence" value="ECO:0000314"/>
    <property type="project" value="dictyBase"/>
</dbReference>
<dbReference type="CDD" id="cd00927">
    <property type="entry name" value="CcO_VIc-like"/>
    <property type="match status" value="1"/>
</dbReference>
<dbReference type="Gene3D" id="4.10.93.10">
    <property type="entry name" value="Mitochondrial cytochrome c oxidase subunit VIc/VIIs"/>
    <property type="match status" value="1"/>
</dbReference>
<dbReference type="InterPro" id="IPR004204">
    <property type="entry name" value="Cox7e/7s"/>
</dbReference>
<dbReference type="InterPro" id="IPR034884">
    <property type="entry name" value="Cytochrome_c_oxidase_VIc/VIIs"/>
</dbReference>
<dbReference type="InterPro" id="IPR037169">
    <property type="entry name" value="Cytochrome_c_oxidase_VIc_sf"/>
</dbReference>
<dbReference type="PANTHER" id="PTHR28264:SF1">
    <property type="entry name" value="CYTOCHROME C OXIDASE SUBUNIT 6C"/>
    <property type="match status" value="1"/>
</dbReference>
<dbReference type="PANTHER" id="PTHR28264">
    <property type="entry name" value="CYTOCHROME C OXIDASE SUBUNIT 7A"/>
    <property type="match status" value="1"/>
</dbReference>
<dbReference type="Pfam" id="PF02937">
    <property type="entry name" value="COX6C"/>
    <property type="match status" value="1"/>
</dbReference>
<dbReference type="SUPFAM" id="SSF81415">
    <property type="entry name" value="Mitochondrial cytochrome c oxidase subunit VIc"/>
    <property type="match status" value="1"/>
</dbReference>
<protein>
    <recommendedName>
        <fullName>Cytochrome c oxidase subunit 7s</fullName>
        <ecNumber>7.1.1.9</ecNumber>
    </recommendedName>
    <alternativeName>
        <fullName>Cytochrome c oxidase polypeptide VIIs</fullName>
    </alternativeName>
</protein>
<reference key="1">
    <citation type="journal article" date="1997" name="EMBO J.">
        <title>Subunit change in cytochrome c oxidase: identification of the oxygen switch in Dictyostelium.</title>
        <authorList>
            <person name="Bisson R."/>
            <person name="Vettore S."/>
            <person name="Aratri E."/>
            <person name="Sandona D."/>
        </authorList>
    </citation>
    <scope>NUCLEOTIDE SEQUENCE [GENOMIC DNA]</scope>
    <source>
        <strain>AX3</strain>
    </source>
</reference>
<reference key="2">
    <citation type="journal article" date="2005" name="Nature">
        <title>The genome of the social amoeba Dictyostelium discoideum.</title>
        <authorList>
            <person name="Eichinger L."/>
            <person name="Pachebat J.A."/>
            <person name="Gloeckner G."/>
            <person name="Rajandream M.A."/>
            <person name="Sucgang R."/>
            <person name="Berriman M."/>
            <person name="Song J."/>
            <person name="Olsen R."/>
            <person name="Szafranski K."/>
            <person name="Xu Q."/>
            <person name="Tunggal B."/>
            <person name="Kummerfeld S."/>
            <person name="Madera M."/>
            <person name="Konfortov B.A."/>
            <person name="Rivero F."/>
            <person name="Bankier A.T."/>
            <person name="Lehmann R."/>
            <person name="Hamlin N."/>
            <person name="Davies R."/>
            <person name="Gaudet P."/>
            <person name="Fey P."/>
            <person name="Pilcher K."/>
            <person name="Chen G."/>
            <person name="Saunders D."/>
            <person name="Sodergren E.J."/>
            <person name="Davis P."/>
            <person name="Kerhornou A."/>
            <person name="Nie X."/>
            <person name="Hall N."/>
            <person name="Anjard C."/>
            <person name="Hemphill L."/>
            <person name="Bason N."/>
            <person name="Farbrother P."/>
            <person name="Desany B."/>
            <person name="Just E."/>
            <person name="Morio T."/>
            <person name="Rost R."/>
            <person name="Churcher C.M."/>
            <person name="Cooper J."/>
            <person name="Haydock S."/>
            <person name="van Driessche N."/>
            <person name="Cronin A."/>
            <person name="Goodhead I."/>
            <person name="Muzny D.M."/>
            <person name="Mourier T."/>
            <person name="Pain A."/>
            <person name="Lu M."/>
            <person name="Harper D."/>
            <person name="Lindsay R."/>
            <person name="Hauser H."/>
            <person name="James K.D."/>
            <person name="Quiles M."/>
            <person name="Madan Babu M."/>
            <person name="Saito T."/>
            <person name="Buchrieser C."/>
            <person name="Wardroper A."/>
            <person name="Felder M."/>
            <person name="Thangavelu M."/>
            <person name="Johnson D."/>
            <person name="Knights A."/>
            <person name="Loulseged H."/>
            <person name="Mungall K.L."/>
            <person name="Oliver K."/>
            <person name="Price C."/>
            <person name="Quail M.A."/>
            <person name="Urushihara H."/>
            <person name="Hernandez J."/>
            <person name="Rabbinowitsch E."/>
            <person name="Steffen D."/>
            <person name="Sanders M."/>
            <person name="Ma J."/>
            <person name="Kohara Y."/>
            <person name="Sharp S."/>
            <person name="Simmonds M.N."/>
            <person name="Spiegler S."/>
            <person name="Tivey A."/>
            <person name="Sugano S."/>
            <person name="White B."/>
            <person name="Walker D."/>
            <person name="Woodward J.R."/>
            <person name="Winckler T."/>
            <person name="Tanaka Y."/>
            <person name="Shaulsky G."/>
            <person name="Schleicher M."/>
            <person name="Weinstock G.M."/>
            <person name="Rosenthal A."/>
            <person name="Cox E.C."/>
            <person name="Chisholm R.L."/>
            <person name="Gibbs R.A."/>
            <person name="Loomis W.F."/>
            <person name="Platzer M."/>
            <person name="Kay R.R."/>
            <person name="Williams J.G."/>
            <person name="Dear P.H."/>
            <person name="Noegel A.A."/>
            <person name="Barrell B.G."/>
            <person name="Kuspa A."/>
        </authorList>
    </citation>
    <scope>NUCLEOTIDE SEQUENCE [LARGE SCALE GENOMIC DNA]</scope>
    <source>
        <strain>AX4</strain>
    </source>
</reference>
<reference key="3">
    <citation type="journal article" date="1995" name="J. Biol. Chem.">
        <title>Expression of cytochrome c oxidase during growth and development of Dictyostelium.</title>
        <authorList>
            <person name="Sandona D."/>
            <person name="Gastaldello S."/>
            <person name="Rizzuto R."/>
            <person name="Bisson R."/>
        </authorList>
    </citation>
    <scope>NUCLEOTIDE SEQUENCE [GENOMIC DNA] OF 1-35</scope>
    <source>
        <strain>AX3</strain>
    </source>
</reference>
<reference key="4">
    <citation type="journal article" date="1990" name="FEBS Lett.">
        <title>The two oxygen-regulated subunits of cytochrome c oxidase in Dictyostelium discoideum derive from a common ancestor.</title>
        <authorList>
            <person name="Capaldi R.A."/>
            <person name="Zhang Y.-Z."/>
            <person name="Rizzuto R."/>
            <person name="Sandona D."/>
            <person name="Schiavo G."/>
            <person name="Bisson R."/>
        </authorList>
    </citation>
    <scope>PROTEIN SEQUENCE OF 2-35</scope>
</reference>
<evidence type="ECO:0000255" key="1"/>
<evidence type="ECO:0000269" key="2">
    <source>
    </source>
</evidence>